<feature type="chain" id="PRO_1000079530" description="Large ribosomal subunit protein uL10">
    <location>
        <begin position="1"/>
        <end position="182"/>
    </location>
</feature>
<organism>
    <name type="scientific">Koribacter versatilis (strain Ellin345)</name>
    <dbReference type="NCBI Taxonomy" id="204669"/>
    <lineage>
        <taxon>Bacteria</taxon>
        <taxon>Pseudomonadati</taxon>
        <taxon>Acidobacteriota</taxon>
        <taxon>Terriglobia</taxon>
        <taxon>Terriglobales</taxon>
        <taxon>Candidatus Korobacteraceae</taxon>
        <taxon>Candidatus Korobacter</taxon>
    </lineage>
</organism>
<comment type="function">
    <text evidence="1">Forms part of the ribosomal stalk, playing a central role in the interaction of the ribosome with GTP-bound translation factors.</text>
</comment>
<comment type="subunit">
    <text evidence="1">Part of the ribosomal stalk of the 50S ribosomal subunit. The N-terminus interacts with L11 and the large rRNA to form the base of the stalk. The C-terminus forms an elongated spine to which L12 dimers bind in a sequential fashion forming a multimeric L10(L12)X complex.</text>
</comment>
<comment type="similarity">
    <text evidence="1">Belongs to the universal ribosomal protein uL10 family.</text>
</comment>
<proteinExistence type="inferred from homology"/>
<gene>
    <name evidence="1" type="primary">rplJ</name>
    <name type="ordered locus">Acid345_4678</name>
</gene>
<reference key="1">
    <citation type="journal article" date="2009" name="Appl. Environ. Microbiol.">
        <title>Three genomes from the phylum Acidobacteria provide insight into the lifestyles of these microorganisms in soils.</title>
        <authorList>
            <person name="Ward N.L."/>
            <person name="Challacombe J.F."/>
            <person name="Janssen P.H."/>
            <person name="Henrissat B."/>
            <person name="Coutinho P.M."/>
            <person name="Wu M."/>
            <person name="Xie G."/>
            <person name="Haft D.H."/>
            <person name="Sait M."/>
            <person name="Badger J."/>
            <person name="Barabote R.D."/>
            <person name="Bradley B."/>
            <person name="Brettin T.S."/>
            <person name="Brinkac L.M."/>
            <person name="Bruce D."/>
            <person name="Creasy T."/>
            <person name="Daugherty S.C."/>
            <person name="Davidsen T.M."/>
            <person name="DeBoy R.T."/>
            <person name="Detter J.C."/>
            <person name="Dodson R.J."/>
            <person name="Durkin A.S."/>
            <person name="Ganapathy A."/>
            <person name="Gwinn-Giglio M."/>
            <person name="Han C.S."/>
            <person name="Khouri H."/>
            <person name="Kiss H."/>
            <person name="Kothari S.P."/>
            <person name="Madupu R."/>
            <person name="Nelson K.E."/>
            <person name="Nelson W.C."/>
            <person name="Paulsen I."/>
            <person name="Penn K."/>
            <person name="Ren Q."/>
            <person name="Rosovitz M.J."/>
            <person name="Selengut J.D."/>
            <person name="Shrivastava S."/>
            <person name="Sullivan S.A."/>
            <person name="Tapia R."/>
            <person name="Thompson L.S."/>
            <person name="Watkins K.L."/>
            <person name="Yang Q."/>
            <person name="Yu C."/>
            <person name="Zafar N."/>
            <person name="Zhou L."/>
            <person name="Kuske C.R."/>
        </authorList>
    </citation>
    <scope>NUCLEOTIDE SEQUENCE [LARGE SCALE GENOMIC DNA]</scope>
    <source>
        <strain>Ellin345</strain>
    </source>
</reference>
<keyword id="KW-1185">Reference proteome</keyword>
<keyword id="KW-0687">Ribonucleoprotein</keyword>
<keyword id="KW-0689">Ribosomal protein</keyword>
<keyword id="KW-0694">RNA-binding</keyword>
<keyword id="KW-0699">rRNA-binding</keyword>
<name>RL10_KORVE</name>
<accession>Q1IHH2</accession>
<evidence type="ECO:0000255" key="1">
    <source>
        <dbReference type="HAMAP-Rule" id="MF_00362"/>
    </source>
</evidence>
<evidence type="ECO:0000305" key="2"/>
<protein>
    <recommendedName>
        <fullName evidence="1">Large ribosomal subunit protein uL10</fullName>
    </recommendedName>
    <alternativeName>
        <fullName evidence="2">50S ribosomal protein L10</fullName>
    </alternativeName>
</protein>
<sequence length="182" mass="19574">MAVTKAKKIEVTEKLTEDFKKANHAIVGTFNKLTVSKDYELRKAVRSVGGKYSVVKNTLAERAAKGTKIEDAVKGLAGVTSVAFTDGDPVQLAKVLSKYAKDNPEYEFKAGVVDGKVIKLADIDALANMPSKEELYSKLLFLISAPAQRLVTVMNATGRDLAVVLNQGVEKQKFSGGEAPAQ</sequence>
<dbReference type="EMBL" id="CP000360">
    <property type="protein sequence ID" value="ABF43678.1"/>
    <property type="molecule type" value="Genomic_DNA"/>
</dbReference>
<dbReference type="RefSeq" id="WP_011525475.1">
    <property type="nucleotide sequence ID" value="NC_008009.1"/>
</dbReference>
<dbReference type="SMR" id="Q1IHH2"/>
<dbReference type="STRING" id="204669.Acid345_4678"/>
<dbReference type="EnsemblBacteria" id="ABF43678">
    <property type="protein sequence ID" value="ABF43678"/>
    <property type="gene ID" value="Acid345_4678"/>
</dbReference>
<dbReference type="KEGG" id="aba:Acid345_4678"/>
<dbReference type="eggNOG" id="COG0244">
    <property type="taxonomic scope" value="Bacteria"/>
</dbReference>
<dbReference type="HOGENOM" id="CLU_092227_1_2_0"/>
<dbReference type="OrthoDB" id="9808307at2"/>
<dbReference type="Proteomes" id="UP000002432">
    <property type="component" value="Chromosome"/>
</dbReference>
<dbReference type="GO" id="GO:1990904">
    <property type="term" value="C:ribonucleoprotein complex"/>
    <property type="evidence" value="ECO:0007669"/>
    <property type="project" value="UniProtKB-KW"/>
</dbReference>
<dbReference type="GO" id="GO:0005840">
    <property type="term" value="C:ribosome"/>
    <property type="evidence" value="ECO:0007669"/>
    <property type="project" value="UniProtKB-KW"/>
</dbReference>
<dbReference type="GO" id="GO:0070180">
    <property type="term" value="F:large ribosomal subunit rRNA binding"/>
    <property type="evidence" value="ECO:0007669"/>
    <property type="project" value="UniProtKB-UniRule"/>
</dbReference>
<dbReference type="GO" id="GO:0006412">
    <property type="term" value="P:translation"/>
    <property type="evidence" value="ECO:0007669"/>
    <property type="project" value="UniProtKB-UniRule"/>
</dbReference>
<dbReference type="CDD" id="cd05797">
    <property type="entry name" value="Ribosomal_L10"/>
    <property type="match status" value="1"/>
</dbReference>
<dbReference type="Gene3D" id="3.30.70.1730">
    <property type="match status" value="1"/>
</dbReference>
<dbReference type="Gene3D" id="6.10.250.290">
    <property type="match status" value="1"/>
</dbReference>
<dbReference type="HAMAP" id="MF_00362">
    <property type="entry name" value="Ribosomal_uL10"/>
    <property type="match status" value="1"/>
</dbReference>
<dbReference type="InterPro" id="IPR001790">
    <property type="entry name" value="Ribosomal_uL10"/>
</dbReference>
<dbReference type="InterPro" id="IPR043141">
    <property type="entry name" value="Ribosomal_uL10-like_sf"/>
</dbReference>
<dbReference type="InterPro" id="IPR022973">
    <property type="entry name" value="Ribosomal_uL10_bac"/>
</dbReference>
<dbReference type="InterPro" id="IPR047865">
    <property type="entry name" value="Ribosomal_uL10_bac_type"/>
</dbReference>
<dbReference type="NCBIfam" id="NF000955">
    <property type="entry name" value="PRK00099.1-1"/>
    <property type="match status" value="1"/>
</dbReference>
<dbReference type="PANTHER" id="PTHR11560">
    <property type="entry name" value="39S RIBOSOMAL PROTEIN L10, MITOCHONDRIAL"/>
    <property type="match status" value="1"/>
</dbReference>
<dbReference type="Pfam" id="PF00466">
    <property type="entry name" value="Ribosomal_L10"/>
    <property type="match status" value="1"/>
</dbReference>
<dbReference type="SUPFAM" id="SSF160369">
    <property type="entry name" value="Ribosomal protein L10-like"/>
    <property type="match status" value="1"/>
</dbReference>